<evidence type="ECO:0000255" key="1">
    <source>
        <dbReference type="HAMAP-Rule" id="MF_01164"/>
    </source>
</evidence>
<dbReference type="EC" id="2.4.2.53" evidence="1"/>
<dbReference type="EMBL" id="CP000075">
    <property type="protein sequence ID" value="AAY37729.1"/>
    <property type="molecule type" value="Genomic_DNA"/>
</dbReference>
<dbReference type="RefSeq" id="WP_011267891.1">
    <property type="nucleotide sequence ID" value="NC_007005.1"/>
</dbReference>
<dbReference type="RefSeq" id="YP_235767.1">
    <property type="nucleotide sequence ID" value="NC_007005.1"/>
</dbReference>
<dbReference type="SMR" id="Q4ZSZ3"/>
<dbReference type="STRING" id="205918.Psyr_2690"/>
<dbReference type="CAZy" id="GT2">
    <property type="family name" value="Glycosyltransferase Family 2"/>
</dbReference>
<dbReference type="KEGG" id="psb:Psyr_2690"/>
<dbReference type="PATRIC" id="fig|205918.7.peg.2750"/>
<dbReference type="eggNOG" id="COG0463">
    <property type="taxonomic scope" value="Bacteria"/>
</dbReference>
<dbReference type="HOGENOM" id="CLU_033536_0_0_6"/>
<dbReference type="OrthoDB" id="9811884at2"/>
<dbReference type="UniPathway" id="UPA00030"/>
<dbReference type="UniPathway" id="UPA00036">
    <property type="reaction ID" value="UER00495"/>
</dbReference>
<dbReference type="Proteomes" id="UP000000426">
    <property type="component" value="Chromosome"/>
</dbReference>
<dbReference type="GO" id="GO:0005886">
    <property type="term" value="C:plasma membrane"/>
    <property type="evidence" value="ECO:0007669"/>
    <property type="project" value="UniProtKB-SubCell"/>
</dbReference>
<dbReference type="GO" id="GO:0016780">
    <property type="term" value="F:phosphotransferase activity, for other substituted phosphate groups"/>
    <property type="evidence" value="ECO:0007669"/>
    <property type="project" value="UniProtKB-UniRule"/>
</dbReference>
<dbReference type="GO" id="GO:0099621">
    <property type="term" value="F:undecaprenyl-phosphate 4-deoxy-4-formamido-L-arabinose transferase activity"/>
    <property type="evidence" value="ECO:0007669"/>
    <property type="project" value="UniProtKB-EC"/>
</dbReference>
<dbReference type="GO" id="GO:0036108">
    <property type="term" value="P:4-amino-4-deoxy-alpha-L-arabinopyranosyl undecaprenyl phosphate biosynthetic process"/>
    <property type="evidence" value="ECO:0007669"/>
    <property type="project" value="UniProtKB-UniRule"/>
</dbReference>
<dbReference type="GO" id="GO:0009245">
    <property type="term" value="P:lipid A biosynthetic process"/>
    <property type="evidence" value="ECO:0007669"/>
    <property type="project" value="UniProtKB-UniRule"/>
</dbReference>
<dbReference type="GO" id="GO:0009103">
    <property type="term" value="P:lipopolysaccharide biosynthetic process"/>
    <property type="evidence" value="ECO:0007669"/>
    <property type="project" value="UniProtKB-UniRule"/>
</dbReference>
<dbReference type="GO" id="GO:0046677">
    <property type="term" value="P:response to antibiotic"/>
    <property type="evidence" value="ECO:0007669"/>
    <property type="project" value="UniProtKB-KW"/>
</dbReference>
<dbReference type="CDD" id="cd04187">
    <property type="entry name" value="DPM1_like_bac"/>
    <property type="match status" value="1"/>
</dbReference>
<dbReference type="Gene3D" id="3.90.550.10">
    <property type="entry name" value="Spore Coat Polysaccharide Biosynthesis Protein SpsA, Chain A"/>
    <property type="match status" value="1"/>
</dbReference>
<dbReference type="HAMAP" id="MF_01164">
    <property type="entry name" value="ArnC_transfer"/>
    <property type="match status" value="1"/>
</dbReference>
<dbReference type="InterPro" id="IPR022857">
    <property type="entry name" value="ArnC_tfrase"/>
</dbReference>
<dbReference type="InterPro" id="IPR001173">
    <property type="entry name" value="Glyco_trans_2-like"/>
</dbReference>
<dbReference type="InterPro" id="IPR050256">
    <property type="entry name" value="Glycosyltransferase_2"/>
</dbReference>
<dbReference type="InterPro" id="IPR029044">
    <property type="entry name" value="Nucleotide-diphossugar_trans"/>
</dbReference>
<dbReference type="NCBIfam" id="NF007986">
    <property type="entry name" value="PRK10714.1"/>
    <property type="match status" value="1"/>
</dbReference>
<dbReference type="PANTHER" id="PTHR48090:SF3">
    <property type="entry name" value="UNDECAPRENYL-PHOSPHATE 4-DEOXY-4-FORMAMIDO-L-ARABINOSE TRANSFERASE"/>
    <property type="match status" value="1"/>
</dbReference>
<dbReference type="PANTHER" id="PTHR48090">
    <property type="entry name" value="UNDECAPRENYL-PHOSPHATE 4-DEOXY-4-FORMAMIDO-L-ARABINOSE TRANSFERASE-RELATED"/>
    <property type="match status" value="1"/>
</dbReference>
<dbReference type="Pfam" id="PF00535">
    <property type="entry name" value="Glycos_transf_2"/>
    <property type="match status" value="1"/>
</dbReference>
<dbReference type="SUPFAM" id="SSF53448">
    <property type="entry name" value="Nucleotide-diphospho-sugar transferases"/>
    <property type="match status" value="1"/>
</dbReference>
<accession>Q4ZSZ3</accession>
<sequence length="337" mass="37793">MKPYPIKFVSIVIPVYNERQSLPELLRRTEAACEQLDHRFEIVLVDDGSRDDSTDILQRAAERADSPFVAVILNRNYGQHAAIMAGFEQCQGDVVITLDADLQNPPEEIPRLVKLAEQGYDVVGTVRSNRQDSAWRRWPSKLINLAVQRSTGVAMNDYGCMLRAYRRTIVDAMLACRERSTFIPILANSFARHTTEVLVDHAEREHGDSKYSPMRLINLMFDLITCMTTTPLRLLSIIGFSMALLGVLFAALLIVLRLIFGASWAGDGMFVLFAVLFVFTGGQFIGMGLLGEYLGRMYSDVRARPRFFIEKIVRSSSPVATDSIDSSVTPYMNKVAP</sequence>
<reference key="1">
    <citation type="journal article" date="2005" name="Proc. Natl. Acad. Sci. U.S.A.">
        <title>Comparison of the complete genome sequences of Pseudomonas syringae pv. syringae B728a and pv. tomato DC3000.</title>
        <authorList>
            <person name="Feil H."/>
            <person name="Feil W.S."/>
            <person name="Chain P."/>
            <person name="Larimer F."/>
            <person name="Dibartolo G."/>
            <person name="Copeland A."/>
            <person name="Lykidis A."/>
            <person name="Trong S."/>
            <person name="Nolan M."/>
            <person name="Goltsman E."/>
            <person name="Thiel J."/>
            <person name="Malfatti S."/>
            <person name="Loper J.E."/>
            <person name="Lapidus A."/>
            <person name="Detter J.C."/>
            <person name="Land M."/>
            <person name="Richardson P.M."/>
            <person name="Kyrpides N.C."/>
            <person name="Ivanova N."/>
            <person name="Lindow S.E."/>
        </authorList>
    </citation>
    <scope>NUCLEOTIDE SEQUENCE [LARGE SCALE GENOMIC DNA]</scope>
    <source>
        <strain>B728a</strain>
    </source>
</reference>
<comment type="function">
    <text evidence="1">Catalyzes the transfer of 4-deoxy-4-formamido-L-arabinose from UDP to undecaprenyl phosphate. The modified arabinose is attached to lipid A and is required for resistance to polymyxin and cationic antimicrobial peptides.</text>
</comment>
<comment type="catalytic activity">
    <reaction evidence="1">
        <text>UDP-4-deoxy-4-formamido-beta-L-arabinose + di-trans,octa-cis-undecaprenyl phosphate = 4-deoxy-4-formamido-alpha-L-arabinopyranosyl di-trans,octa-cis-undecaprenyl phosphate + UDP</text>
        <dbReference type="Rhea" id="RHEA:27722"/>
        <dbReference type="ChEBI" id="CHEBI:58223"/>
        <dbReference type="ChEBI" id="CHEBI:58709"/>
        <dbReference type="ChEBI" id="CHEBI:58909"/>
        <dbReference type="ChEBI" id="CHEBI:60392"/>
        <dbReference type="EC" id="2.4.2.53"/>
    </reaction>
</comment>
<comment type="pathway">
    <text evidence="1">Glycolipid biosynthesis; 4-amino-4-deoxy-alpha-L-arabinose undecaprenyl phosphate biosynthesis; 4-amino-4-deoxy-alpha-L-arabinose undecaprenyl phosphate from UDP-4-deoxy-4-formamido-beta-L-arabinose and undecaprenyl phosphate: step 1/2.</text>
</comment>
<comment type="pathway">
    <text evidence="1">Bacterial outer membrane biogenesis; lipopolysaccharide biosynthesis.</text>
</comment>
<comment type="subcellular location">
    <subcellularLocation>
        <location evidence="1">Cell inner membrane</location>
        <topology evidence="1">Multi-pass membrane protein</topology>
    </subcellularLocation>
</comment>
<comment type="similarity">
    <text evidence="1">Belongs to the glycosyltransferase 2 family.</text>
</comment>
<gene>
    <name evidence="1" type="primary">arnC</name>
    <name type="ordered locus">Psyr_2690</name>
</gene>
<organism>
    <name type="scientific">Pseudomonas syringae pv. syringae (strain B728a)</name>
    <dbReference type="NCBI Taxonomy" id="205918"/>
    <lineage>
        <taxon>Bacteria</taxon>
        <taxon>Pseudomonadati</taxon>
        <taxon>Pseudomonadota</taxon>
        <taxon>Gammaproteobacteria</taxon>
        <taxon>Pseudomonadales</taxon>
        <taxon>Pseudomonadaceae</taxon>
        <taxon>Pseudomonas</taxon>
        <taxon>Pseudomonas syringae</taxon>
    </lineage>
</organism>
<proteinExistence type="inferred from homology"/>
<protein>
    <recommendedName>
        <fullName evidence="1">Undecaprenyl-phosphate 4-deoxy-4-formamido-L-arabinose transferase</fullName>
        <ecNumber evidence="1">2.4.2.53</ecNumber>
    </recommendedName>
    <alternativeName>
        <fullName evidence="1">Undecaprenyl-phosphate Ara4FN transferase</fullName>
        <shortName evidence="1">Ara4FN transferase</shortName>
    </alternativeName>
</protein>
<feature type="chain" id="PRO_0000380271" description="Undecaprenyl-phosphate 4-deoxy-4-formamido-L-arabinose transferase">
    <location>
        <begin position="1"/>
        <end position="337"/>
    </location>
</feature>
<feature type="transmembrane region" description="Helical" evidence="1">
    <location>
        <begin position="235"/>
        <end position="255"/>
    </location>
</feature>
<feature type="transmembrane region" description="Helical" evidence="1">
    <location>
        <begin position="270"/>
        <end position="290"/>
    </location>
</feature>
<keyword id="KW-0046">Antibiotic resistance</keyword>
<keyword id="KW-0997">Cell inner membrane</keyword>
<keyword id="KW-1003">Cell membrane</keyword>
<keyword id="KW-0328">Glycosyltransferase</keyword>
<keyword id="KW-0441">Lipid A biosynthesis</keyword>
<keyword id="KW-0444">Lipid biosynthesis</keyword>
<keyword id="KW-0443">Lipid metabolism</keyword>
<keyword id="KW-0448">Lipopolysaccharide biosynthesis</keyword>
<keyword id="KW-0472">Membrane</keyword>
<keyword id="KW-0808">Transferase</keyword>
<keyword id="KW-0812">Transmembrane</keyword>
<keyword id="KW-1133">Transmembrane helix</keyword>
<name>ARNC_PSEU2</name>